<accession>Q483C6</accession>
<gene>
    <name evidence="1" type="primary">ruvC</name>
    <name type="ordered locus">CPS_2115</name>
</gene>
<evidence type="ECO:0000255" key="1">
    <source>
        <dbReference type="HAMAP-Rule" id="MF_00034"/>
    </source>
</evidence>
<reference key="1">
    <citation type="journal article" date="2005" name="Proc. Natl. Acad. Sci. U.S.A.">
        <title>The psychrophilic lifestyle as revealed by the genome sequence of Colwellia psychrerythraea 34H through genomic and proteomic analyses.</title>
        <authorList>
            <person name="Methe B.A."/>
            <person name="Nelson K.E."/>
            <person name="Deming J.W."/>
            <person name="Momen B."/>
            <person name="Melamud E."/>
            <person name="Zhang X."/>
            <person name="Moult J."/>
            <person name="Madupu R."/>
            <person name="Nelson W.C."/>
            <person name="Dodson R.J."/>
            <person name="Brinkac L.M."/>
            <person name="Daugherty S.C."/>
            <person name="Durkin A.S."/>
            <person name="DeBoy R.T."/>
            <person name="Kolonay J.F."/>
            <person name="Sullivan S.A."/>
            <person name="Zhou L."/>
            <person name="Davidsen T.M."/>
            <person name="Wu M."/>
            <person name="Huston A.L."/>
            <person name="Lewis M."/>
            <person name="Weaver B."/>
            <person name="Weidman J.F."/>
            <person name="Khouri H."/>
            <person name="Utterback T.R."/>
            <person name="Feldblyum T.V."/>
            <person name="Fraser C.M."/>
        </authorList>
    </citation>
    <scope>NUCLEOTIDE SEQUENCE [LARGE SCALE GENOMIC DNA]</scope>
    <source>
        <strain>34H / ATCC BAA-681</strain>
    </source>
</reference>
<sequence length="175" mass="18334">MTIILGIDPGSRFTGYGVIKQEKQRFTYLGSGCIKAMSQGEDLASRLQTIFAGVSELIIQFKPDMFAIEQVFMGVNPGGALKLGQARGAAIVAATNSGLTIAEYSARQIKQAVVGTGAADKNQVQHMVKSILKLPGTPQADAADALAVALCHGHSHTSAAILAGQATKIVRGRLR</sequence>
<dbReference type="EC" id="3.1.21.10" evidence="1"/>
<dbReference type="EMBL" id="CP000083">
    <property type="protein sequence ID" value="AAZ23978.1"/>
    <property type="molecule type" value="Genomic_DNA"/>
</dbReference>
<dbReference type="RefSeq" id="WP_011042935.1">
    <property type="nucleotide sequence ID" value="NC_003910.7"/>
</dbReference>
<dbReference type="SMR" id="Q483C6"/>
<dbReference type="STRING" id="167879.CPS_2115"/>
<dbReference type="KEGG" id="cps:CPS_2115"/>
<dbReference type="eggNOG" id="COG0817">
    <property type="taxonomic scope" value="Bacteria"/>
</dbReference>
<dbReference type="HOGENOM" id="CLU_091257_3_1_6"/>
<dbReference type="Proteomes" id="UP000000547">
    <property type="component" value="Chromosome"/>
</dbReference>
<dbReference type="GO" id="GO:0005737">
    <property type="term" value="C:cytoplasm"/>
    <property type="evidence" value="ECO:0007669"/>
    <property type="project" value="UniProtKB-SubCell"/>
</dbReference>
<dbReference type="GO" id="GO:0048476">
    <property type="term" value="C:Holliday junction resolvase complex"/>
    <property type="evidence" value="ECO:0007669"/>
    <property type="project" value="UniProtKB-UniRule"/>
</dbReference>
<dbReference type="GO" id="GO:0008821">
    <property type="term" value="F:crossover junction DNA endonuclease activity"/>
    <property type="evidence" value="ECO:0007669"/>
    <property type="project" value="UniProtKB-UniRule"/>
</dbReference>
<dbReference type="GO" id="GO:0003677">
    <property type="term" value="F:DNA binding"/>
    <property type="evidence" value="ECO:0007669"/>
    <property type="project" value="UniProtKB-KW"/>
</dbReference>
<dbReference type="GO" id="GO:0000287">
    <property type="term" value="F:magnesium ion binding"/>
    <property type="evidence" value="ECO:0007669"/>
    <property type="project" value="UniProtKB-UniRule"/>
</dbReference>
<dbReference type="GO" id="GO:0006310">
    <property type="term" value="P:DNA recombination"/>
    <property type="evidence" value="ECO:0007669"/>
    <property type="project" value="UniProtKB-UniRule"/>
</dbReference>
<dbReference type="GO" id="GO:0006281">
    <property type="term" value="P:DNA repair"/>
    <property type="evidence" value="ECO:0007669"/>
    <property type="project" value="UniProtKB-UniRule"/>
</dbReference>
<dbReference type="CDD" id="cd16962">
    <property type="entry name" value="RuvC"/>
    <property type="match status" value="1"/>
</dbReference>
<dbReference type="FunFam" id="3.30.420.10:FF:000002">
    <property type="entry name" value="Crossover junction endodeoxyribonuclease RuvC"/>
    <property type="match status" value="1"/>
</dbReference>
<dbReference type="Gene3D" id="3.30.420.10">
    <property type="entry name" value="Ribonuclease H-like superfamily/Ribonuclease H"/>
    <property type="match status" value="1"/>
</dbReference>
<dbReference type="HAMAP" id="MF_00034">
    <property type="entry name" value="RuvC"/>
    <property type="match status" value="1"/>
</dbReference>
<dbReference type="InterPro" id="IPR012337">
    <property type="entry name" value="RNaseH-like_sf"/>
</dbReference>
<dbReference type="InterPro" id="IPR036397">
    <property type="entry name" value="RNaseH_sf"/>
</dbReference>
<dbReference type="InterPro" id="IPR020563">
    <property type="entry name" value="X-over_junc_endoDNase_Mg_BS"/>
</dbReference>
<dbReference type="InterPro" id="IPR002176">
    <property type="entry name" value="X-over_junc_endoDNase_RuvC"/>
</dbReference>
<dbReference type="NCBIfam" id="TIGR00228">
    <property type="entry name" value="ruvC"/>
    <property type="match status" value="1"/>
</dbReference>
<dbReference type="PANTHER" id="PTHR30194">
    <property type="entry name" value="CROSSOVER JUNCTION ENDODEOXYRIBONUCLEASE RUVC"/>
    <property type="match status" value="1"/>
</dbReference>
<dbReference type="PANTHER" id="PTHR30194:SF3">
    <property type="entry name" value="CROSSOVER JUNCTION ENDODEOXYRIBONUCLEASE RUVC"/>
    <property type="match status" value="1"/>
</dbReference>
<dbReference type="Pfam" id="PF02075">
    <property type="entry name" value="RuvC"/>
    <property type="match status" value="1"/>
</dbReference>
<dbReference type="PRINTS" id="PR00696">
    <property type="entry name" value="RSOLVASERUVC"/>
</dbReference>
<dbReference type="SUPFAM" id="SSF53098">
    <property type="entry name" value="Ribonuclease H-like"/>
    <property type="match status" value="1"/>
</dbReference>
<dbReference type="PROSITE" id="PS01321">
    <property type="entry name" value="RUVC"/>
    <property type="match status" value="1"/>
</dbReference>
<protein>
    <recommendedName>
        <fullName evidence="1">Crossover junction endodeoxyribonuclease RuvC</fullName>
        <ecNumber evidence="1">3.1.21.10</ecNumber>
    </recommendedName>
    <alternativeName>
        <fullName evidence="1">Holliday junction nuclease RuvC</fullName>
    </alternativeName>
    <alternativeName>
        <fullName evidence="1">Holliday junction resolvase RuvC</fullName>
    </alternativeName>
</protein>
<name>RUVC_COLP3</name>
<feature type="chain" id="PRO_0000225133" description="Crossover junction endodeoxyribonuclease RuvC">
    <location>
        <begin position="1"/>
        <end position="175"/>
    </location>
</feature>
<feature type="active site" evidence="1">
    <location>
        <position position="8"/>
    </location>
</feature>
<feature type="active site" evidence="1">
    <location>
        <position position="69"/>
    </location>
</feature>
<feature type="active site" evidence="1">
    <location>
        <position position="141"/>
    </location>
</feature>
<feature type="binding site" evidence="1">
    <location>
        <position position="8"/>
    </location>
    <ligand>
        <name>Mg(2+)</name>
        <dbReference type="ChEBI" id="CHEBI:18420"/>
        <label>1</label>
    </ligand>
</feature>
<feature type="binding site" evidence="1">
    <location>
        <position position="69"/>
    </location>
    <ligand>
        <name>Mg(2+)</name>
        <dbReference type="ChEBI" id="CHEBI:18420"/>
        <label>2</label>
    </ligand>
</feature>
<feature type="binding site" evidence="1">
    <location>
        <position position="141"/>
    </location>
    <ligand>
        <name>Mg(2+)</name>
        <dbReference type="ChEBI" id="CHEBI:18420"/>
        <label>1</label>
    </ligand>
</feature>
<keyword id="KW-0963">Cytoplasm</keyword>
<keyword id="KW-0227">DNA damage</keyword>
<keyword id="KW-0233">DNA recombination</keyword>
<keyword id="KW-0234">DNA repair</keyword>
<keyword id="KW-0238">DNA-binding</keyword>
<keyword id="KW-0255">Endonuclease</keyword>
<keyword id="KW-0378">Hydrolase</keyword>
<keyword id="KW-0460">Magnesium</keyword>
<keyword id="KW-0479">Metal-binding</keyword>
<keyword id="KW-0540">Nuclease</keyword>
<organism>
    <name type="scientific">Colwellia psychrerythraea (strain 34H / ATCC BAA-681)</name>
    <name type="common">Vibrio psychroerythus</name>
    <dbReference type="NCBI Taxonomy" id="167879"/>
    <lineage>
        <taxon>Bacteria</taxon>
        <taxon>Pseudomonadati</taxon>
        <taxon>Pseudomonadota</taxon>
        <taxon>Gammaproteobacteria</taxon>
        <taxon>Alteromonadales</taxon>
        <taxon>Colwelliaceae</taxon>
        <taxon>Colwellia</taxon>
    </lineage>
</organism>
<comment type="function">
    <text evidence="1">The RuvA-RuvB-RuvC complex processes Holliday junction (HJ) DNA during genetic recombination and DNA repair. Endonuclease that resolves HJ intermediates. Cleaves cruciform DNA by making single-stranded nicks across the HJ at symmetrical positions within the homologous arms, yielding a 5'-phosphate and a 3'-hydroxyl group; requires a central core of homology in the junction. The consensus cleavage sequence is 5'-(A/T)TT(C/G)-3'. Cleavage occurs on the 3'-side of the TT dinucleotide at the point of strand exchange. HJ branch migration catalyzed by RuvA-RuvB allows RuvC to scan DNA until it finds its consensus sequence, where it cleaves and resolves the cruciform DNA.</text>
</comment>
<comment type="catalytic activity">
    <reaction evidence="1">
        <text>Endonucleolytic cleavage at a junction such as a reciprocal single-stranded crossover between two homologous DNA duplexes (Holliday junction).</text>
        <dbReference type="EC" id="3.1.21.10"/>
    </reaction>
</comment>
<comment type="cofactor">
    <cofactor evidence="1">
        <name>Mg(2+)</name>
        <dbReference type="ChEBI" id="CHEBI:18420"/>
    </cofactor>
    <text evidence="1">Binds 2 Mg(2+) ion per subunit.</text>
</comment>
<comment type="subunit">
    <text evidence="1">Homodimer which binds Holliday junction (HJ) DNA. The HJ becomes 2-fold symmetrical on binding to RuvC with unstacked arms; it has a different conformation from HJ DNA in complex with RuvA. In the full resolvosome a probable DNA-RuvA(4)-RuvB(12)-RuvC(2) complex forms which resolves the HJ.</text>
</comment>
<comment type="subcellular location">
    <subcellularLocation>
        <location evidence="1">Cytoplasm</location>
    </subcellularLocation>
</comment>
<comment type="similarity">
    <text evidence="1">Belongs to the RuvC family.</text>
</comment>
<proteinExistence type="inferred from homology"/>